<evidence type="ECO:0000255" key="1">
    <source>
        <dbReference type="HAMAP-Rule" id="MF_01341"/>
    </source>
</evidence>
<evidence type="ECO:0000256" key="2">
    <source>
        <dbReference type="SAM" id="MobiDB-lite"/>
    </source>
</evidence>
<evidence type="ECO:0000305" key="3"/>
<reference key="1">
    <citation type="journal article" date="2005" name="Arch. Microbiol.">
        <title>The genome sequence of an anaerobic aromatic-degrading denitrifying bacterium, strain EbN1.</title>
        <authorList>
            <person name="Rabus R."/>
            <person name="Kube M."/>
            <person name="Heider J."/>
            <person name="Beck A."/>
            <person name="Heitmann K."/>
            <person name="Widdel F."/>
            <person name="Reinhardt R."/>
        </authorList>
    </citation>
    <scope>NUCLEOTIDE SEQUENCE [LARGE SCALE GENOMIC DNA]</scope>
    <source>
        <strain>DSM 19018 / LMG 30748 / EbN1</strain>
    </source>
</reference>
<proteinExistence type="inferred from homology"/>
<sequence>MRLNTIKPGAGSKSAAKRVGRGIGSGLGKTCGRGHKGQKSRAGGFHKVGFEGGQMPLQRRLPKRGFVSLTAARKVEVRLSELDKLPVDDIDLLVLMQAGVVPADALSAKVVLSGTIGRKITLRGIGATKGALAAIEAAGGSVATA</sequence>
<dbReference type="EMBL" id="CR555306">
    <property type="protein sequence ID" value="CAI08301.1"/>
    <property type="molecule type" value="Genomic_DNA"/>
</dbReference>
<dbReference type="RefSeq" id="WP_011237991.1">
    <property type="nucleotide sequence ID" value="NC_006513.1"/>
</dbReference>
<dbReference type="SMR" id="Q5P313"/>
<dbReference type="STRING" id="76114.ebB131"/>
<dbReference type="KEGG" id="eba:ebB131"/>
<dbReference type="eggNOG" id="COG0200">
    <property type="taxonomic scope" value="Bacteria"/>
</dbReference>
<dbReference type="HOGENOM" id="CLU_055188_4_2_4"/>
<dbReference type="OrthoDB" id="9810293at2"/>
<dbReference type="Proteomes" id="UP000006552">
    <property type="component" value="Chromosome"/>
</dbReference>
<dbReference type="GO" id="GO:0022625">
    <property type="term" value="C:cytosolic large ribosomal subunit"/>
    <property type="evidence" value="ECO:0007669"/>
    <property type="project" value="TreeGrafter"/>
</dbReference>
<dbReference type="GO" id="GO:0019843">
    <property type="term" value="F:rRNA binding"/>
    <property type="evidence" value="ECO:0007669"/>
    <property type="project" value="UniProtKB-UniRule"/>
</dbReference>
<dbReference type="GO" id="GO:0003735">
    <property type="term" value="F:structural constituent of ribosome"/>
    <property type="evidence" value="ECO:0007669"/>
    <property type="project" value="InterPro"/>
</dbReference>
<dbReference type="GO" id="GO:0006412">
    <property type="term" value="P:translation"/>
    <property type="evidence" value="ECO:0007669"/>
    <property type="project" value="UniProtKB-UniRule"/>
</dbReference>
<dbReference type="Gene3D" id="3.100.10.10">
    <property type="match status" value="1"/>
</dbReference>
<dbReference type="HAMAP" id="MF_01341">
    <property type="entry name" value="Ribosomal_uL15"/>
    <property type="match status" value="1"/>
</dbReference>
<dbReference type="InterPro" id="IPR030878">
    <property type="entry name" value="Ribosomal_uL15"/>
</dbReference>
<dbReference type="InterPro" id="IPR021131">
    <property type="entry name" value="Ribosomal_uL15/eL18"/>
</dbReference>
<dbReference type="InterPro" id="IPR036227">
    <property type="entry name" value="Ribosomal_uL15/eL18_sf"/>
</dbReference>
<dbReference type="InterPro" id="IPR005749">
    <property type="entry name" value="Ribosomal_uL15_bac-type"/>
</dbReference>
<dbReference type="InterPro" id="IPR001196">
    <property type="entry name" value="Ribosomal_uL15_CS"/>
</dbReference>
<dbReference type="NCBIfam" id="TIGR01071">
    <property type="entry name" value="rplO_bact"/>
    <property type="match status" value="1"/>
</dbReference>
<dbReference type="PANTHER" id="PTHR12934">
    <property type="entry name" value="50S RIBOSOMAL PROTEIN L15"/>
    <property type="match status" value="1"/>
</dbReference>
<dbReference type="PANTHER" id="PTHR12934:SF11">
    <property type="entry name" value="LARGE RIBOSOMAL SUBUNIT PROTEIN UL15M"/>
    <property type="match status" value="1"/>
</dbReference>
<dbReference type="Pfam" id="PF00828">
    <property type="entry name" value="Ribosomal_L27A"/>
    <property type="match status" value="1"/>
</dbReference>
<dbReference type="SUPFAM" id="SSF52080">
    <property type="entry name" value="Ribosomal proteins L15p and L18e"/>
    <property type="match status" value="1"/>
</dbReference>
<dbReference type="PROSITE" id="PS00475">
    <property type="entry name" value="RIBOSOMAL_L15"/>
    <property type="match status" value="1"/>
</dbReference>
<feature type="chain" id="PRO_0000104665" description="Large ribosomal subunit protein uL15">
    <location>
        <begin position="1"/>
        <end position="145"/>
    </location>
</feature>
<feature type="region of interest" description="Disordered" evidence="2">
    <location>
        <begin position="1"/>
        <end position="43"/>
    </location>
</feature>
<feature type="compositionally biased region" description="Gly residues" evidence="2">
    <location>
        <begin position="21"/>
        <end position="31"/>
    </location>
</feature>
<accession>Q5P313</accession>
<gene>
    <name evidence="1" type="primary">rplO</name>
    <name type="ordered locus">AZOSEA21760</name>
    <name type="ORF">ebB131</name>
</gene>
<keyword id="KW-1185">Reference proteome</keyword>
<keyword id="KW-0687">Ribonucleoprotein</keyword>
<keyword id="KW-0689">Ribosomal protein</keyword>
<keyword id="KW-0694">RNA-binding</keyword>
<keyword id="KW-0699">rRNA-binding</keyword>
<comment type="function">
    <text evidence="1">Binds to the 23S rRNA.</text>
</comment>
<comment type="subunit">
    <text evidence="1">Part of the 50S ribosomal subunit.</text>
</comment>
<comment type="similarity">
    <text evidence="1">Belongs to the universal ribosomal protein uL15 family.</text>
</comment>
<organism>
    <name type="scientific">Aromatoleum aromaticum (strain DSM 19018 / LMG 30748 / EbN1)</name>
    <name type="common">Azoarcus sp. (strain EbN1)</name>
    <dbReference type="NCBI Taxonomy" id="76114"/>
    <lineage>
        <taxon>Bacteria</taxon>
        <taxon>Pseudomonadati</taxon>
        <taxon>Pseudomonadota</taxon>
        <taxon>Betaproteobacteria</taxon>
        <taxon>Rhodocyclales</taxon>
        <taxon>Rhodocyclaceae</taxon>
        <taxon>Aromatoleum</taxon>
    </lineage>
</organism>
<name>RL15_AROAE</name>
<protein>
    <recommendedName>
        <fullName evidence="1">Large ribosomal subunit protein uL15</fullName>
    </recommendedName>
    <alternativeName>
        <fullName evidence="3">50S ribosomal protein L15</fullName>
    </alternativeName>
</protein>